<protein>
    <recommendedName>
        <fullName>Thioredoxin-dependent peroxide reductase, mitochondrial</fullName>
        <ecNumber evidence="6">1.11.1.24</ecNumber>
    </recommendedName>
    <alternativeName>
        <fullName>Antioxidant protein 1</fullName>
        <shortName>AOP-1</shortName>
    </alternativeName>
    <alternativeName>
        <fullName>PRX III</fullName>
    </alternativeName>
    <alternativeName>
        <fullName>Perioredoxin-3</fullName>
    </alternativeName>
    <alternativeName>
        <fullName>Protein MER5</fullName>
    </alternativeName>
    <alternativeName>
        <fullName evidence="7">Thioredoxin-dependent peroxiredoxin 3</fullName>
    </alternativeName>
</protein>
<reference key="1">
    <citation type="journal article" date="1989" name="Gene">
        <title>Cloning of a housekeeping-type gene (MER5) preferentially expressed in murine erythroleukemia cells.</title>
        <authorList>
            <person name="Yamamoto T."/>
            <person name="Matsui Y."/>
            <person name="Natori S."/>
            <person name="Obinata M."/>
        </authorList>
    </citation>
    <scope>NUCLEOTIDE SEQUENCE [MRNA]</scope>
</reference>
<reference key="2">
    <citation type="submission" date="1999-12" db="EMBL/GenBank/DDBJ databases">
        <title>Characterization of mouse peroxiredoxin III genomic DNA and its expression.</title>
        <authorList>
            <person name="Lee T.-H."/>
            <person name="Rhee S.G."/>
            <person name="Lee K.-K."/>
            <person name="Yu D.-Y."/>
        </authorList>
    </citation>
    <scope>NUCLEOTIDE SEQUENCE [GENOMIC DNA / MRNA]</scope>
</reference>
<reference key="3">
    <citation type="journal article" date="2005" name="Science">
        <title>The transcriptional landscape of the mammalian genome.</title>
        <authorList>
            <person name="Carninci P."/>
            <person name="Kasukawa T."/>
            <person name="Katayama S."/>
            <person name="Gough J."/>
            <person name="Frith M.C."/>
            <person name="Maeda N."/>
            <person name="Oyama R."/>
            <person name="Ravasi T."/>
            <person name="Lenhard B."/>
            <person name="Wells C."/>
            <person name="Kodzius R."/>
            <person name="Shimokawa K."/>
            <person name="Bajic V.B."/>
            <person name="Brenner S.E."/>
            <person name="Batalov S."/>
            <person name="Forrest A.R."/>
            <person name="Zavolan M."/>
            <person name="Davis M.J."/>
            <person name="Wilming L.G."/>
            <person name="Aidinis V."/>
            <person name="Allen J.E."/>
            <person name="Ambesi-Impiombato A."/>
            <person name="Apweiler R."/>
            <person name="Aturaliya R.N."/>
            <person name="Bailey T.L."/>
            <person name="Bansal M."/>
            <person name="Baxter L."/>
            <person name="Beisel K.W."/>
            <person name="Bersano T."/>
            <person name="Bono H."/>
            <person name="Chalk A.M."/>
            <person name="Chiu K.P."/>
            <person name="Choudhary V."/>
            <person name="Christoffels A."/>
            <person name="Clutterbuck D.R."/>
            <person name="Crowe M.L."/>
            <person name="Dalla E."/>
            <person name="Dalrymple B.P."/>
            <person name="de Bono B."/>
            <person name="Della Gatta G."/>
            <person name="di Bernardo D."/>
            <person name="Down T."/>
            <person name="Engstrom P."/>
            <person name="Fagiolini M."/>
            <person name="Faulkner G."/>
            <person name="Fletcher C.F."/>
            <person name="Fukushima T."/>
            <person name="Furuno M."/>
            <person name="Futaki S."/>
            <person name="Gariboldi M."/>
            <person name="Georgii-Hemming P."/>
            <person name="Gingeras T.R."/>
            <person name="Gojobori T."/>
            <person name="Green R.E."/>
            <person name="Gustincich S."/>
            <person name="Harbers M."/>
            <person name="Hayashi Y."/>
            <person name="Hensch T.K."/>
            <person name="Hirokawa N."/>
            <person name="Hill D."/>
            <person name="Huminiecki L."/>
            <person name="Iacono M."/>
            <person name="Ikeo K."/>
            <person name="Iwama A."/>
            <person name="Ishikawa T."/>
            <person name="Jakt M."/>
            <person name="Kanapin A."/>
            <person name="Katoh M."/>
            <person name="Kawasawa Y."/>
            <person name="Kelso J."/>
            <person name="Kitamura H."/>
            <person name="Kitano H."/>
            <person name="Kollias G."/>
            <person name="Krishnan S.P."/>
            <person name="Kruger A."/>
            <person name="Kummerfeld S.K."/>
            <person name="Kurochkin I.V."/>
            <person name="Lareau L.F."/>
            <person name="Lazarevic D."/>
            <person name="Lipovich L."/>
            <person name="Liu J."/>
            <person name="Liuni S."/>
            <person name="McWilliam S."/>
            <person name="Madan Babu M."/>
            <person name="Madera M."/>
            <person name="Marchionni L."/>
            <person name="Matsuda H."/>
            <person name="Matsuzawa S."/>
            <person name="Miki H."/>
            <person name="Mignone F."/>
            <person name="Miyake S."/>
            <person name="Morris K."/>
            <person name="Mottagui-Tabar S."/>
            <person name="Mulder N."/>
            <person name="Nakano N."/>
            <person name="Nakauchi H."/>
            <person name="Ng P."/>
            <person name="Nilsson R."/>
            <person name="Nishiguchi S."/>
            <person name="Nishikawa S."/>
            <person name="Nori F."/>
            <person name="Ohara O."/>
            <person name="Okazaki Y."/>
            <person name="Orlando V."/>
            <person name="Pang K.C."/>
            <person name="Pavan W.J."/>
            <person name="Pavesi G."/>
            <person name="Pesole G."/>
            <person name="Petrovsky N."/>
            <person name="Piazza S."/>
            <person name="Reed J."/>
            <person name="Reid J.F."/>
            <person name="Ring B.Z."/>
            <person name="Ringwald M."/>
            <person name="Rost B."/>
            <person name="Ruan Y."/>
            <person name="Salzberg S.L."/>
            <person name="Sandelin A."/>
            <person name="Schneider C."/>
            <person name="Schoenbach C."/>
            <person name="Sekiguchi K."/>
            <person name="Semple C.A."/>
            <person name="Seno S."/>
            <person name="Sessa L."/>
            <person name="Sheng Y."/>
            <person name="Shibata Y."/>
            <person name="Shimada H."/>
            <person name="Shimada K."/>
            <person name="Silva D."/>
            <person name="Sinclair B."/>
            <person name="Sperling S."/>
            <person name="Stupka E."/>
            <person name="Sugiura K."/>
            <person name="Sultana R."/>
            <person name="Takenaka Y."/>
            <person name="Taki K."/>
            <person name="Tammoja K."/>
            <person name="Tan S.L."/>
            <person name="Tang S."/>
            <person name="Taylor M.S."/>
            <person name="Tegner J."/>
            <person name="Teichmann S.A."/>
            <person name="Ueda H.R."/>
            <person name="van Nimwegen E."/>
            <person name="Verardo R."/>
            <person name="Wei C.L."/>
            <person name="Yagi K."/>
            <person name="Yamanishi H."/>
            <person name="Zabarovsky E."/>
            <person name="Zhu S."/>
            <person name="Zimmer A."/>
            <person name="Hide W."/>
            <person name="Bult C."/>
            <person name="Grimmond S.M."/>
            <person name="Teasdale R.D."/>
            <person name="Liu E.T."/>
            <person name="Brusic V."/>
            <person name="Quackenbush J."/>
            <person name="Wahlestedt C."/>
            <person name="Mattick J.S."/>
            <person name="Hume D.A."/>
            <person name="Kai C."/>
            <person name="Sasaki D."/>
            <person name="Tomaru Y."/>
            <person name="Fukuda S."/>
            <person name="Kanamori-Katayama M."/>
            <person name="Suzuki M."/>
            <person name="Aoki J."/>
            <person name="Arakawa T."/>
            <person name="Iida J."/>
            <person name="Imamura K."/>
            <person name="Itoh M."/>
            <person name="Kato T."/>
            <person name="Kawaji H."/>
            <person name="Kawagashira N."/>
            <person name="Kawashima T."/>
            <person name="Kojima M."/>
            <person name="Kondo S."/>
            <person name="Konno H."/>
            <person name="Nakano K."/>
            <person name="Ninomiya N."/>
            <person name="Nishio T."/>
            <person name="Okada M."/>
            <person name="Plessy C."/>
            <person name="Shibata K."/>
            <person name="Shiraki T."/>
            <person name="Suzuki S."/>
            <person name="Tagami M."/>
            <person name="Waki K."/>
            <person name="Watahiki A."/>
            <person name="Okamura-Oho Y."/>
            <person name="Suzuki H."/>
            <person name="Kawai J."/>
            <person name="Hayashizaki Y."/>
        </authorList>
    </citation>
    <scope>NUCLEOTIDE SEQUENCE [LARGE SCALE MRNA]</scope>
    <source>
        <strain>C57BL/6J</strain>
        <tissue>Kidney</tissue>
    </source>
</reference>
<reference key="4">
    <citation type="journal article" date="2004" name="Genome Res.">
        <title>The status, quality, and expansion of the NIH full-length cDNA project: the Mammalian Gene Collection (MGC).</title>
        <authorList>
            <consortium name="The MGC Project Team"/>
        </authorList>
    </citation>
    <scope>NUCLEOTIDE SEQUENCE [LARGE SCALE MRNA]</scope>
    <source>
        <strain>FVB/N</strain>
        <tissue>Mammary gland</tissue>
    </source>
</reference>
<reference key="5">
    <citation type="submission" date="2007-07" db="UniProtKB">
        <authorList>
            <person name="Lubec G."/>
            <person name="Kang S.U."/>
            <person name="Klug S."/>
            <person name="Yang J.W."/>
            <person name="Zigmond M."/>
        </authorList>
    </citation>
    <scope>PROTEIN SEQUENCE OF 85-92; 151-167 AND 172-215</scope>
    <scope>IDENTIFICATION BY MASS SPECTROMETRY</scope>
    <source>
        <strain>C57BL/6J</strain>
        <tissue>Brain</tissue>
        <tissue>Hippocampus</tissue>
    </source>
</reference>
<reference key="6">
    <citation type="journal article" date="1998" name="J. Biol. Chem.">
        <title>Mammalian peroxiredoxin isoforms can reduce hydrogen peroxide generated in response to growth factors and tumor necrosis factor-alpha.</title>
        <authorList>
            <person name="Kang S.W."/>
            <person name="Chae H.Z."/>
            <person name="Seo M.S."/>
            <person name="Kim K."/>
            <person name="Baines I.C."/>
            <person name="Rhee S.G."/>
        </authorList>
    </citation>
    <scope>CATALYTIC ACTIVITY</scope>
    <scope>SUBCELLULAR LOCATION</scope>
</reference>
<reference key="7">
    <citation type="journal article" date="2010" name="Cell">
        <title>A tissue-specific atlas of mouse protein phosphorylation and expression.</title>
        <authorList>
            <person name="Huttlin E.L."/>
            <person name="Jedrychowski M.P."/>
            <person name="Elias J.E."/>
            <person name="Goswami T."/>
            <person name="Rad R."/>
            <person name="Beausoleil S.A."/>
            <person name="Villen J."/>
            <person name="Haas W."/>
            <person name="Sowa M.E."/>
            <person name="Gygi S.P."/>
        </authorList>
    </citation>
    <scope>IDENTIFICATION BY MASS SPECTROMETRY [LARGE SCALE ANALYSIS]</scope>
    <source>
        <tissue>Brain</tissue>
        <tissue>Brown adipose tissue</tissue>
        <tissue>Heart</tissue>
        <tissue>Kidney</tissue>
        <tissue>Liver</tissue>
        <tissue>Lung</tissue>
        <tissue>Pancreas</tissue>
        <tissue>Spleen</tissue>
        <tissue>Testis</tissue>
    </source>
</reference>
<reference key="8">
    <citation type="journal article" date="2013" name="Mol. Cell">
        <title>SIRT5-mediated lysine desuccinylation impacts diverse metabolic pathways.</title>
        <authorList>
            <person name="Park J."/>
            <person name="Chen Y."/>
            <person name="Tishkoff D.X."/>
            <person name="Peng C."/>
            <person name="Tan M."/>
            <person name="Dai L."/>
            <person name="Xie Z."/>
            <person name="Zhang Y."/>
            <person name="Zwaans B.M."/>
            <person name="Skinner M.E."/>
            <person name="Lombard D.B."/>
            <person name="Zhao Y."/>
        </authorList>
    </citation>
    <scope>SUCCINYLATION [LARGE SCALE ANALYSIS] AT LYS-84 AND LYS-92</scope>
    <scope>IDENTIFICATION BY MASS SPECTROMETRY [LARGE SCALE ANALYSIS]</scope>
    <source>
        <tissue>Liver</tissue>
    </source>
</reference>
<reference key="9">
    <citation type="journal article" date="2013" name="Proc. Natl. Acad. Sci. U.S.A.">
        <title>Label-free quantitative proteomics of the lysine acetylome in mitochondria identifies substrates of SIRT3 in metabolic pathways.</title>
        <authorList>
            <person name="Rardin M.J."/>
            <person name="Newman J.C."/>
            <person name="Held J.M."/>
            <person name="Cusack M.P."/>
            <person name="Sorensen D.J."/>
            <person name="Li B."/>
            <person name="Schilling B."/>
            <person name="Mooney S.D."/>
            <person name="Kahn C.R."/>
            <person name="Verdin E."/>
            <person name="Gibson B.W."/>
        </authorList>
    </citation>
    <scope>ACETYLATION [LARGE SCALE ANALYSIS] AT LYS-92</scope>
    <scope>IDENTIFICATION BY MASS SPECTROMETRY [LARGE SCALE ANALYSIS]</scope>
    <source>
        <tissue>Liver</tissue>
    </source>
</reference>
<reference key="10">
    <citation type="journal article" date="2016" name="Exp. Biol. Med. (Maywood)">
        <title>Accelerated decline of physical strength in peroxiredoxin-3 knockout mice.</title>
        <authorList>
            <person name="Zhang Y.G."/>
            <person name="Wang L."/>
            <person name="Kaifu T."/>
            <person name="Li J."/>
            <person name="Li X."/>
            <person name="Li L."/>
        </authorList>
    </citation>
    <scope>FUNCTION</scope>
    <scope>DISRUPTION PHENOTYPE</scope>
</reference>
<reference key="11">
    <citation type="journal article" date="2019" name="Nat. Chem. Biol.">
        <title>ABHD10 is an S-depalmitoylase affecting redox homeostasis through peroxiredoxin-5.</title>
        <authorList>
            <person name="Cao Y."/>
            <person name="Qiu T."/>
            <person name="Kathayat R.S."/>
            <person name="Azizi S.A."/>
            <person name="Thorne A.K."/>
            <person name="Ahn D."/>
            <person name="Fukata Y."/>
            <person name="Fukata M."/>
            <person name="Rice P.A."/>
            <person name="Dickinson B.C."/>
        </authorList>
    </citation>
    <scope>PALMITOYLATION</scope>
</reference>
<evidence type="ECO:0000250" key="1">
    <source>
        <dbReference type="UniProtKB" id="P30048"/>
    </source>
</evidence>
<evidence type="ECO:0000250" key="2">
    <source>
        <dbReference type="UniProtKB" id="P35705"/>
    </source>
</evidence>
<evidence type="ECO:0000255" key="3">
    <source>
        <dbReference type="PROSITE-ProRule" id="PRU00691"/>
    </source>
</evidence>
<evidence type="ECO:0000269" key="4">
    <source>
    </source>
</evidence>
<evidence type="ECO:0000269" key="5">
    <source>
    </source>
</evidence>
<evidence type="ECO:0000269" key="6">
    <source>
    </source>
</evidence>
<evidence type="ECO:0000305" key="7"/>
<evidence type="ECO:0000305" key="8">
    <source>
    </source>
</evidence>
<evidence type="ECO:0007744" key="9">
    <source>
    </source>
</evidence>
<evidence type="ECO:0007744" key="10">
    <source>
    </source>
</evidence>
<sequence length="257" mass="28127">MAAAAGRLLWSSVARHASAISRSISASTVLRPVASRRTCLTDILWSASAQGKSAFSTSSSFHTPAVTQHAPYFKGTAVVNGEFKELSLDDFKGKYLVLFFYPLDFTFVCPTEIVAFSDKANEFHDVNCEVVAVSVDSHFSHLAWINTPRKNGGLGHMNITLLSDITKQISRDYGVLLESAGIALRGLFIIDPNGVVKHLSVNDLPVGRSVEETLRLVKAFQFVETHGEVCPANWTPESPTIKPSPTASKEYFEKVHQ</sequence>
<gene>
    <name type="primary">Prdx3</name>
    <name type="synonym">Aop1</name>
    <name type="synonym">Mer5</name>
</gene>
<keyword id="KW-0007">Acetylation</keyword>
<keyword id="KW-0049">Antioxidant</keyword>
<keyword id="KW-0963">Cytoplasm</keyword>
<keyword id="KW-0903">Direct protein sequencing</keyword>
<keyword id="KW-1015">Disulfide bond</keyword>
<keyword id="KW-0967">Endosome</keyword>
<keyword id="KW-0449">Lipoprotein</keyword>
<keyword id="KW-0496">Mitochondrion</keyword>
<keyword id="KW-0560">Oxidoreductase</keyword>
<keyword id="KW-0564">Palmitate</keyword>
<keyword id="KW-0575">Peroxidase</keyword>
<keyword id="KW-0597">Phosphoprotein</keyword>
<keyword id="KW-0676">Redox-active center</keyword>
<keyword id="KW-1185">Reference proteome</keyword>
<keyword id="KW-0809">Transit peptide</keyword>
<organism>
    <name type="scientific">Mus musculus</name>
    <name type="common">Mouse</name>
    <dbReference type="NCBI Taxonomy" id="10090"/>
    <lineage>
        <taxon>Eukaryota</taxon>
        <taxon>Metazoa</taxon>
        <taxon>Chordata</taxon>
        <taxon>Craniata</taxon>
        <taxon>Vertebrata</taxon>
        <taxon>Euteleostomi</taxon>
        <taxon>Mammalia</taxon>
        <taxon>Eutheria</taxon>
        <taxon>Euarchontoglires</taxon>
        <taxon>Glires</taxon>
        <taxon>Rodentia</taxon>
        <taxon>Myomorpha</taxon>
        <taxon>Muroidea</taxon>
        <taxon>Muridae</taxon>
        <taxon>Murinae</taxon>
        <taxon>Mus</taxon>
        <taxon>Mus</taxon>
    </lineage>
</organism>
<name>PRDX3_MOUSE</name>
<comment type="function">
    <text evidence="1 4">Thiol-specific peroxidase that catalyzes the reduction of hydrogen peroxide and organic hydroperoxides to water and alcohols, respectively. Plays a role in cell protection against oxidative stress by detoxifying peroxides. Acts synergistically with MAP3K13 to regulate the activation of NF-kappa-B in the cytosol (By similarity). Required for the maintenance of physical strength (PubMed:27037278).</text>
</comment>
<comment type="catalytic activity">
    <reaction evidence="6">
        <text>a hydroperoxide + [thioredoxin]-dithiol = an alcohol + [thioredoxin]-disulfide + H2O</text>
        <dbReference type="Rhea" id="RHEA:62620"/>
        <dbReference type="Rhea" id="RHEA-COMP:10698"/>
        <dbReference type="Rhea" id="RHEA-COMP:10700"/>
        <dbReference type="ChEBI" id="CHEBI:15377"/>
        <dbReference type="ChEBI" id="CHEBI:29950"/>
        <dbReference type="ChEBI" id="CHEBI:30879"/>
        <dbReference type="ChEBI" id="CHEBI:35924"/>
        <dbReference type="ChEBI" id="CHEBI:50058"/>
        <dbReference type="EC" id="1.11.1.24"/>
    </reaction>
</comment>
<comment type="subunit">
    <text evidence="1">Homodimer; disulfide-linked, upon oxidation. 6 homodimers assemble to form a ring-like dodecamer. Interacts with NEK6. Interacts with LRRK2. Interacts with MAP3K13 (By similarity). Interacts with RPS6KC1 (via PX domain).</text>
</comment>
<comment type="subcellular location">
    <subcellularLocation>
        <location evidence="6">Mitochondrion</location>
    </subcellularLocation>
    <subcellularLocation>
        <location evidence="1">Cytoplasm</location>
    </subcellularLocation>
    <subcellularLocation>
        <location evidence="1">Early endosome</location>
    </subcellularLocation>
    <text evidence="1">Localizes to early endosomes in a RPS6KC1-dependent manner.</text>
</comment>
<comment type="tissue specificity">
    <text>Housekeeping-type gene preferentially expressed in murine erythroleukemia (MEL) cells.</text>
</comment>
<comment type="induction">
    <text>Expression is increased after induction of MEL cells to differentiation by DMSO.</text>
</comment>
<comment type="PTM">
    <text evidence="1">Phosphorylated by LRRK2; phosphorylation reduces perodixase activity.</text>
</comment>
<comment type="PTM">
    <text evidence="1">The enzyme can be inactivated by further oxidation of the cysteine sulfenic acid (C(P)-SOH) to sulphinic acid (C(P)-SO2H) and sulphonic acid (C(P)-SO3H) instead of its condensation to a disulfide bond.</text>
</comment>
<comment type="PTM">
    <text evidence="5">S-palmitoylated.</text>
</comment>
<comment type="disruption phenotype">
    <text evidence="4">Accelerates decline of physical strength; at the age of 10 months, the physical strength is much lower than in the wild-type littermate (PubMed:27037278). Increased oxidative damage and decreased mitochondrial DNA copy number in skeletal muscles (PubMed:27037278). Increased apoptotic cells in the brain (PubMed:27037278).</text>
</comment>
<comment type="miscellaneous">
    <text evidence="8">The active site is a conserved redox-active cysteine residue, the peroxidatic cysteine (C(P)), which makes the nucleophilic attack on the peroxide substrate. The peroxide oxidizes the C(P)-SH to cysteine sulfenic acid (C(P)-SOH), which then reacts with another cysteine residue, the resolving cysteine (C(R)), to form a disulfide bridge. The disulfide is subsequently reduced by an appropriate electron donor to complete the catalytic cycle. In this typical 2-Cys peroxiredoxin, C(R) is provided by the other dimeric subunit to form an intersubunit disulfide. The disulfide is subsequently reduced by thioredoxin.</text>
</comment>
<comment type="similarity">
    <text evidence="7">Belongs to the peroxiredoxin family. AhpC/Prx1 subfamily.</text>
</comment>
<proteinExistence type="evidence at protein level"/>
<feature type="transit peptide" description="Mitochondrion" evidence="1">
    <location>
        <begin position="1"/>
        <end position="62"/>
    </location>
</feature>
<feature type="chain" id="PRO_0000023783" description="Thioredoxin-dependent peroxide reductase, mitochondrial">
    <location>
        <begin position="63"/>
        <end position="257"/>
    </location>
</feature>
<feature type="domain" description="Thioredoxin" evidence="3">
    <location>
        <begin position="64"/>
        <end position="222"/>
    </location>
</feature>
<feature type="active site" description="Cysteine sulfenic acid (-SOH) intermediate" evidence="2">
    <location>
        <position position="109"/>
    </location>
</feature>
<feature type="modified residue" description="N6-succinyllysine" evidence="10">
    <location>
        <position position="84"/>
    </location>
</feature>
<feature type="modified residue" description="N6-acetyllysine; alternate" evidence="9">
    <location>
        <position position="92"/>
    </location>
</feature>
<feature type="modified residue" description="N6-succinyllysine; alternate" evidence="10">
    <location>
        <position position="92"/>
    </location>
</feature>
<feature type="modified residue" description="Phosphothreonine" evidence="1">
    <location>
        <position position="147"/>
    </location>
</feature>
<feature type="disulfide bond" description="Interchain (with C-230); in linked form" evidence="2">
    <location>
        <position position="109"/>
    </location>
</feature>
<feature type="disulfide bond" description="Interchain (with C-109); in linked form" evidence="2">
    <location>
        <position position="230"/>
    </location>
</feature>
<dbReference type="EC" id="1.11.1.24" evidence="6"/>
<dbReference type="EMBL" id="M28723">
    <property type="protein sequence ID" value="AAA39524.1"/>
    <property type="molecule type" value="mRNA"/>
</dbReference>
<dbReference type="EMBL" id="AF211938">
    <property type="protein sequence ID" value="AAF63705.1"/>
    <property type="molecule type" value="Genomic_DNA"/>
</dbReference>
<dbReference type="EMBL" id="AF211933">
    <property type="protein sequence ID" value="AAF63705.1"/>
    <property type="status" value="JOINED"/>
    <property type="molecule type" value="Genomic_DNA"/>
</dbReference>
<dbReference type="EMBL" id="AF211934">
    <property type="protein sequence ID" value="AAF63705.1"/>
    <property type="status" value="JOINED"/>
    <property type="molecule type" value="Genomic_DNA"/>
</dbReference>
<dbReference type="EMBL" id="AF211935">
    <property type="protein sequence ID" value="AAF63705.1"/>
    <property type="status" value="JOINED"/>
    <property type="molecule type" value="Genomic_DNA"/>
</dbReference>
<dbReference type="EMBL" id="AF211936">
    <property type="protein sequence ID" value="AAF63705.1"/>
    <property type="status" value="JOINED"/>
    <property type="molecule type" value="Genomic_DNA"/>
</dbReference>
<dbReference type="EMBL" id="AF211937">
    <property type="protein sequence ID" value="AAF63705.1"/>
    <property type="status" value="JOINED"/>
    <property type="molecule type" value="Genomic_DNA"/>
</dbReference>
<dbReference type="EMBL" id="AK002448">
    <property type="protein sequence ID" value="BAB22108.1"/>
    <property type="molecule type" value="mRNA"/>
</dbReference>
<dbReference type="EMBL" id="BC005626">
    <property type="protein sequence ID" value="AAH05626.1"/>
    <property type="molecule type" value="mRNA"/>
</dbReference>
<dbReference type="CCDS" id="CCDS29944.1"/>
<dbReference type="PIR" id="JQ0064">
    <property type="entry name" value="JQ0064"/>
</dbReference>
<dbReference type="RefSeq" id="NP_031478.1">
    <property type="nucleotide sequence ID" value="NM_007452.2"/>
</dbReference>
<dbReference type="SMR" id="P20108"/>
<dbReference type="BioGRID" id="198117">
    <property type="interactions" value="19"/>
</dbReference>
<dbReference type="FunCoup" id="P20108">
    <property type="interactions" value="1528"/>
</dbReference>
<dbReference type="IntAct" id="P20108">
    <property type="interactions" value="5"/>
</dbReference>
<dbReference type="MINT" id="P20108"/>
<dbReference type="STRING" id="10090.ENSMUSP00000025961"/>
<dbReference type="PeroxiBase" id="4499">
    <property type="entry name" value="Mm2CysPrx03"/>
</dbReference>
<dbReference type="GlyGen" id="P20108">
    <property type="glycosylation" value="3 sites, 1 O-linked glycan (2 sites)"/>
</dbReference>
<dbReference type="iPTMnet" id="P20108"/>
<dbReference type="PhosphoSitePlus" id="P20108"/>
<dbReference type="SwissPalm" id="P20108"/>
<dbReference type="REPRODUCTION-2DPAGE" id="IPI00116192"/>
<dbReference type="REPRODUCTION-2DPAGE" id="P20108"/>
<dbReference type="jPOST" id="P20108"/>
<dbReference type="PaxDb" id="10090-ENSMUSP00000025961"/>
<dbReference type="PeptideAtlas" id="P20108"/>
<dbReference type="ProteomicsDB" id="291867"/>
<dbReference type="Pumba" id="P20108"/>
<dbReference type="TopDownProteomics" id="P20108"/>
<dbReference type="Antibodypedia" id="3274">
    <property type="antibodies" value="559 antibodies from 41 providers"/>
</dbReference>
<dbReference type="DNASU" id="11757"/>
<dbReference type="Ensembl" id="ENSMUST00000025961.7">
    <property type="protein sequence ID" value="ENSMUSP00000025961.7"/>
    <property type="gene ID" value="ENSMUSG00000024997.8"/>
</dbReference>
<dbReference type="GeneID" id="11757"/>
<dbReference type="KEGG" id="mmu:11757"/>
<dbReference type="UCSC" id="uc008icd.1">
    <property type="organism name" value="mouse"/>
</dbReference>
<dbReference type="AGR" id="MGI:88034"/>
<dbReference type="CTD" id="10935"/>
<dbReference type="MGI" id="MGI:88034">
    <property type="gene designation" value="Prdx3"/>
</dbReference>
<dbReference type="VEuPathDB" id="HostDB:ENSMUSG00000024997"/>
<dbReference type="eggNOG" id="KOG0852">
    <property type="taxonomic scope" value="Eukaryota"/>
</dbReference>
<dbReference type="GeneTree" id="ENSGT00940000153430"/>
<dbReference type="HOGENOM" id="CLU_042529_21_0_1"/>
<dbReference type="InParanoid" id="P20108"/>
<dbReference type="OMA" id="KDSKQYF"/>
<dbReference type="OrthoDB" id="185659at2759"/>
<dbReference type="PhylomeDB" id="P20108"/>
<dbReference type="TreeFam" id="TF105181"/>
<dbReference type="Reactome" id="R-MMU-3299685">
    <property type="pathway name" value="Detoxification of Reactive Oxygen Species"/>
</dbReference>
<dbReference type="BioGRID-ORCS" id="11757">
    <property type="hits" value="3 hits in 79 CRISPR screens"/>
</dbReference>
<dbReference type="ChiTaRS" id="Prdx3">
    <property type="organism name" value="mouse"/>
</dbReference>
<dbReference type="PRO" id="PR:P20108"/>
<dbReference type="Proteomes" id="UP000000589">
    <property type="component" value="Chromosome 19"/>
</dbReference>
<dbReference type="RNAct" id="P20108">
    <property type="molecule type" value="protein"/>
</dbReference>
<dbReference type="Bgee" id="ENSMUSG00000024997">
    <property type="expression patterns" value="Expressed in adrenal gland and 266 other cell types or tissues"/>
</dbReference>
<dbReference type="GO" id="GO:0005829">
    <property type="term" value="C:cytosol"/>
    <property type="evidence" value="ECO:0007669"/>
    <property type="project" value="Ensembl"/>
</dbReference>
<dbReference type="GO" id="GO:0005769">
    <property type="term" value="C:early endosome"/>
    <property type="evidence" value="ECO:0007669"/>
    <property type="project" value="UniProtKB-SubCell"/>
</dbReference>
<dbReference type="GO" id="GO:0005739">
    <property type="term" value="C:mitochondrion"/>
    <property type="evidence" value="ECO:0007005"/>
    <property type="project" value="MGI"/>
</dbReference>
<dbReference type="GO" id="GO:0043209">
    <property type="term" value="C:myelin sheath"/>
    <property type="evidence" value="ECO:0007005"/>
    <property type="project" value="UniProtKB"/>
</dbReference>
<dbReference type="GO" id="GO:0005654">
    <property type="term" value="C:nucleoplasm"/>
    <property type="evidence" value="ECO:0007669"/>
    <property type="project" value="Ensembl"/>
</dbReference>
<dbReference type="GO" id="GO:0005886">
    <property type="term" value="C:plasma membrane"/>
    <property type="evidence" value="ECO:0007669"/>
    <property type="project" value="Ensembl"/>
</dbReference>
<dbReference type="GO" id="GO:0032991">
    <property type="term" value="C:protein-containing complex"/>
    <property type="evidence" value="ECO:0007669"/>
    <property type="project" value="Ensembl"/>
</dbReference>
<dbReference type="GO" id="GO:0043027">
    <property type="term" value="F:cysteine-type endopeptidase inhibitor activity involved in apoptotic process"/>
    <property type="evidence" value="ECO:0007669"/>
    <property type="project" value="Ensembl"/>
</dbReference>
<dbReference type="GO" id="GO:0042802">
    <property type="term" value="F:identical protein binding"/>
    <property type="evidence" value="ECO:0000353"/>
    <property type="project" value="MGI"/>
</dbReference>
<dbReference type="GO" id="GO:0019901">
    <property type="term" value="F:protein kinase binding"/>
    <property type="evidence" value="ECO:0007669"/>
    <property type="project" value="Ensembl"/>
</dbReference>
<dbReference type="GO" id="GO:0008379">
    <property type="term" value="F:thioredoxin peroxidase activity"/>
    <property type="evidence" value="ECO:0007669"/>
    <property type="project" value="Ensembl"/>
</dbReference>
<dbReference type="GO" id="GO:0034614">
    <property type="term" value="P:cellular response to reactive oxygen species"/>
    <property type="evidence" value="ECO:0007669"/>
    <property type="project" value="Ensembl"/>
</dbReference>
<dbReference type="GO" id="GO:0042744">
    <property type="term" value="P:hydrogen peroxide catabolic process"/>
    <property type="evidence" value="ECO:0000266"/>
    <property type="project" value="MGI"/>
</dbReference>
<dbReference type="GO" id="GO:0001893">
    <property type="term" value="P:maternal placenta development"/>
    <property type="evidence" value="ECO:0000315"/>
    <property type="project" value="MGI"/>
</dbReference>
<dbReference type="GO" id="GO:0007005">
    <property type="term" value="P:mitochondrion organization"/>
    <property type="evidence" value="ECO:0007669"/>
    <property type="project" value="Ensembl"/>
</dbReference>
<dbReference type="GO" id="GO:0030099">
    <property type="term" value="P:myeloid cell differentiation"/>
    <property type="evidence" value="ECO:0000315"/>
    <property type="project" value="MGI"/>
</dbReference>
<dbReference type="GO" id="GO:0043066">
    <property type="term" value="P:negative regulation of apoptotic process"/>
    <property type="evidence" value="ECO:0007669"/>
    <property type="project" value="Ensembl"/>
</dbReference>
<dbReference type="GO" id="GO:0008284">
    <property type="term" value="P:positive regulation of cell population proliferation"/>
    <property type="evidence" value="ECO:0007669"/>
    <property type="project" value="Ensembl"/>
</dbReference>
<dbReference type="GO" id="GO:0051881">
    <property type="term" value="P:regulation of mitochondrial membrane potential"/>
    <property type="evidence" value="ECO:0007669"/>
    <property type="project" value="Ensembl"/>
</dbReference>
<dbReference type="GO" id="GO:0042542">
    <property type="term" value="P:response to hydrogen peroxide"/>
    <property type="evidence" value="ECO:0007669"/>
    <property type="project" value="Ensembl"/>
</dbReference>
<dbReference type="GO" id="GO:0032496">
    <property type="term" value="P:response to lipopolysaccharide"/>
    <property type="evidence" value="ECO:0000315"/>
    <property type="project" value="MGI"/>
</dbReference>
<dbReference type="GO" id="GO:0006979">
    <property type="term" value="P:response to oxidative stress"/>
    <property type="evidence" value="ECO:0000315"/>
    <property type="project" value="MGI"/>
</dbReference>
<dbReference type="CDD" id="cd03015">
    <property type="entry name" value="PRX_Typ2cys"/>
    <property type="match status" value="1"/>
</dbReference>
<dbReference type="FunFam" id="3.40.30.10:FF:000003">
    <property type="entry name" value="Peroxiredoxin 1"/>
    <property type="match status" value="1"/>
</dbReference>
<dbReference type="Gene3D" id="3.40.30.10">
    <property type="entry name" value="Glutaredoxin"/>
    <property type="match status" value="1"/>
</dbReference>
<dbReference type="InterPro" id="IPR000866">
    <property type="entry name" value="AhpC/TSA"/>
</dbReference>
<dbReference type="InterPro" id="IPR050217">
    <property type="entry name" value="Peroxiredoxin"/>
</dbReference>
<dbReference type="InterPro" id="IPR019479">
    <property type="entry name" value="Peroxiredoxin_C"/>
</dbReference>
<dbReference type="InterPro" id="IPR036249">
    <property type="entry name" value="Thioredoxin-like_sf"/>
</dbReference>
<dbReference type="InterPro" id="IPR013766">
    <property type="entry name" value="Thioredoxin_domain"/>
</dbReference>
<dbReference type="PANTHER" id="PTHR10681">
    <property type="entry name" value="THIOREDOXIN PEROXIDASE"/>
    <property type="match status" value="1"/>
</dbReference>
<dbReference type="PANTHER" id="PTHR10681:SF128">
    <property type="entry name" value="THIOREDOXIN-DEPENDENT PEROXIDE REDUCTASE, MITOCHONDRIAL"/>
    <property type="match status" value="1"/>
</dbReference>
<dbReference type="Pfam" id="PF10417">
    <property type="entry name" value="1-cysPrx_C"/>
    <property type="match status" value="1"/>
</dbReference>
<dbReference type="Pfam" id="PF00578">
    <property type="entry name" value="AhpC-TSA"/>
    <property type="match status" value="1"/>
</dbReference>
<dbReference type="SUPFAM" id="SSF52833">
    <property type="entry name" value="Thioredoxin-like"/>
    <property type="match status" value="1"/>
</dbReference>
<dbReference type="PROSITE" id="PS51352">
    <property type="entry name" value="THIOREDOXIN_2"/>
    <property type="match status" value="1"/>
</dbReference>
<accession>P20108</accession>